<organism>
    <name type="scientific">Escherichia coli O9:H4 (strain HS)</name>
    <dbReference type="NCBI Taxonomy" id="331112"/>
    <lineage>
        <taxon>Bacteria</taxon>
        <taxon>Pseudomonadati</taxon>
        <taxon>Pseudomonadota</taxon>
        <taxon>Gammaproteobacteria</taxon>
        <taxon>Enterobacterales</taxon>
        <taxon>Enterobacteriaceae</taxon>
        <taxon>Escherichia</taxon>
    </lineage>
</organism>
<reference key="1">
    <citation type="journal article" date="2008" name="J. Bacteriol.">
        <title>The pangenome structure of Escherichia coli: comparative genomic analysis of E. coli commensal and pathogenic isolates.</title>
        <authorList>
            <person name="Rasko D.A."/>
            <person name="Rosovitz M.J."/>
            <person name="Myers G.S.A."/>
            <person name="Mongodin E.F."/>
            <person name="Fricke W.F."/>
            <person name="Gajer P."/>
            <person name="Crabtree J."/>
            <person name="Sebaihia M."/>
            <person name="Thomson N.R."/>
            <person name="Chaudhuri R."/>
            <person name="Henderson I.R."/>
            <person name="Sperandio V."/>
            <person name="Ravel J."/>
        </authorList>
    </citation>
    <scope>NUCLEOTIDE SEQUENCE [LARGE SCALE GENOMIC DNA]</scope>
    <source>
        <strain>HS</strain>
    </source>
</reference>
<feature type="chain" id="PRO_1000066855" description="UPF0229 protein YeaH">
    <location>
        <begin position="1"/>
        <end position="427"/>
    </location>
</feature>
<feature type="region of interest" description="Disordered" evidence="2">
    <location>
        <begin position="79"/>
        <end position="110"/>
    </location>
</feature>
<feature type="compositionally biased region" description="Basic and acidic residues" evidence="2">
    <location>
        <begin position="79"/>
        <end position="90"/>
    </location>
</feature>
<feature type="compositionally biased region" description="Gly residues" evidence="2">
    <location>
        <begin position="92"/>
        <end position="102"/>
    </location>
</feature>
<protein>
    <recommendedName>
        <fullName evidence="1">UPF0229 protein YeaH</fullName>
    </recommendedName>
</protein>
<comment type="similarity">
    <text evidence="1">Belongs to the UPF0229 family.</text>
</comment>
<proteinExistence type="inferred from homology"/>
<accession>A8A0X7</accession>
<gene>
    <name evidence="1" type="primary">yeaH</name>
    <name type="ordered locus">EcHS_A1870</name>
</gene>
<name>YEAH_ECOHS</name>
<sequence length="427" mass="49436">MTWFIDRRLNGKNKSMVNRQRFLRRYKAQIKQSISEAINKRSVTDVDSGESVSIPTEDISEPMFHQGRGGLRHRVHPGNDHFVQNDRIERPQGGGGGSGSGQGQASQDGEGQDEFVFQISKDEYLDLLFEDLALPNLKQNQQRQLTEYKTHRAGYTANGVPANISVVRSLQNSLARRTAMTAGKRRELHALEENLAIISNSEPAQLLEEERLRKEIAELRAKIERVPFIDTFDLRYKNYEKRPDPSSQAVMFCLMDVSGSMDQSTKDMAKRFYVLLYLFLSRTYKNVEVVYIRHHTQAKEVDEHEFFYSQETGGTIVSSALKLMDEVVKERYNPAQWNIYAAQASDGDNWADDSPLCHEILAKKLLPVVRYYSYIEITRRAHQTLWREYEHLQSTFDNFAMQHIRDQDDIYPVFRELFHKQNATAKD</sequence>
<dbReference type="EMBL" id="CP000802">
    <property type="protein sequence ID" value="ABV06181.1"/>
    <property type="molecule type" value="Genomic_DNA"/>
</dbReference>
<dbReference type="RefSeq" id="WP_000219691.1">
    <property type="nucleotide sequence ID" value="NC_009800.1"/>
</dbReference>
<dbReference type="SMR" id="A8A0X7"/>
<dbReference type="KEGG" id="ecx:EcHS_A1870"/>
<dbReference type="HOGENOM" id="CLU_049702_0_0_6"/>
<dbReference type="HAMAP" id="MF_01232">
    <property type="entry name" value="UPF0229"/>
    <property type="match status" value="1"/>
</dbReference>
<dbReference type="InterPro" id="IPR006698">
    <property type="entry name" value="UPF0229"/>
</dbReference>
<dbReference type="NCBIfam" id="NF003707">
    <property type="entry name" value="PRK05325.1-2"/>
    <property type="match status" value="1"/>
</dbReference>
<dbReference type="NCBIfam" id="NF003708">
    <property type="entry name" value="PRK05325.1-3"/>
    <property type="match status" value="1"/>
</dbReference>
<dbReference type="PANTHER" id="PTHR30510">
    <property type="entry name" value="UPF0229 PROTEIN YEAH"/>
    <property type="match status" value="1"/>
</dbReference>
<dbReference type="PANTHER" id="PTHR30510:SF2">
    <property type="entry name" value="UPF0229 PROTEIN YEAH"/>
    <property type="match status" value="1"/>
</dbReference>
<dbReference type="Pfam" id="PF04285">
    <property type="entry name" value="DUF444"/>
    <property type="match status" value="1"/>
</dbReference>
<evidence type="ECO:0000255" key="1">
    <source>
        <dbReference type="HAMAP-Rule" id="MF_01232"/>
    </source>
</evidence>
<evidence type="ECO:0000256" key="2">
    <source>
        <dbReference type="SAM" id="MobiDB-lite"/>
    </source>
</evidence>